<protein>
    <recommendedName>
        <fullName>Inner membrane ALBINO3-like protein 1, chloroplastic</fullName>
    </recommendedName>
</protein>
<keyword id="KW-0150">Chloroplast</keyword>
<keyword id="KW-0472">Membrane</keyword>
<keyword id="KW-0934">Plastid</keyword>
<keyword id="KW-0793">Thylakoid</keyword>
<keyword id="KW-0809">Transit peptide</keyword>
<keyword id="KW-0812">Transmembrane</keyword>
<keyword id="KW-1133">Transmembrane helix</keyword>
<accession>Q8S339</accession>
<sequence>MSSSMCLARCSASLSAGNFPSRMFMGRLHAQRRTRTLQLRCAASLLPDQPTLAASSAISPVPSDLPEVLGDALHRLGAIYVLADASASTAAAAVMPTAVDSAAGAAPQRAGGWVAPVADALEQVLYALQEGLDKLHVPYSYGYSIILLTLIVKLLTYPLTKQQVESAMAVQALKPRIDLIKDRFGEDKDKIQKETSVLYEQAGVNPLAGCLPTLATIPIFIGLFSSLTNVANDGLLDTQGFYFVPSLAGPTTMAMRQSGLGTSWLWPLGPDGAPPIGWEDAAAYLTLPLLLVAVQYASSSVTSPPIDPKDENANTQRALLVFLPLMVGWFSLNVPAGLSLYYLANTVLSSAIQIYLKKLGGANVVMNELGPVTKPGSGRRNGVAAGEWSVWKPATVLTTAEAAKARAEAEEAVERAREAAEEAAAAAAFDNASVSLSVDDSTAAIAGTATMAVTAGAPAAAMDPSKVNRRCKRRRLTSLVQDGSTASAAVAGASA</sequence>
<name>ALB31_CHLRE</name>
<gene>
    <name type="primary">ALB3.1</name>
</gene>
<proteinExistence type="inferred from homology"/>
<dbReference type="EMBL" id="AF492768">
    <property type="protein sequence ID" value="AAM11662.1"/>
    <property type="molecule type" value="Genomic_DNA"/>
</dbReference>
<dbReference type="SMR" id="Q8S339"/>
<dbReference type="PaxDb" id="3055-EDP08623"/>
<dbReference type="eggNOG" id="KOG1239">
    <property type="taxonomic scope" value="Eukaryota"/>
</dbReference>
<dbReference type="BioCyc" id="MetaCyc:MONOMER-16599"/>
<dbReference type="GO" id="GO:0009535">
    <property type="term" value="C:chloroplast thylakoid membrane"/>
    <property type="evidence" value="ECO:0007669"/>
    <property type="project" value="UniProtKB-SubCell"/>
</dbReference>
<dbReference type="GO" id="GO:0032977">
    <property type="term" value="F:membrane insertase activity"/>
    <property type="evidence" value="ECO:0007669"/>
    <property type="project" value="InterPro"/>
</dbReference>
<dbReference type="CDD" id="cd20070">
    <property type="entry name" value="5TM_YidC_Alb3"/>
    <property type="match status" value="1"/>
</dbReference>
<dbReference type="InterPro" id="IPR001708">
    <property type="entry name" value="YidC/ALB3/OXA1/COX18"/>
</dbReference>
<dbReference type="InterPro" id="IPR028055">
    <property type="entry name" value="YidC/Oxa/ALB_C"/>
</dbReference>
<dbReference type="InterPro" id="IPR047196">
    <property type="entry name" value="YidC_ALB_C"/>
</dbReference>
<dbReference type="NCBIfam" id="TIGR03592">
    <property type="entry name" value="yidC_oxa1_cterm"/>
    <property type="match status" value="1"/>
</dbReference>
<dbReference type="PANTHER" id="PTHR12428:SF14">
    <property type="entry name" value="ALBINO3-LIKE PROTEIN 1, CHLOROPLASTIC"/>
    <property type="match status" value="1"/>
</dbReference>
<dbReference type="PANTHER" id="PTHR12428">
    <property type="entry name" value="OXA1"/>
    <property type="match status" value="1"/>
</dbReference>
<dbReference type="Pfam" id="PF02096">
    <property type="entry name" value="60KD_IMP"/>
    <property type="match status" value="1"/>
</dbReference>
<organism>
    <name type="scientific">Chlamydomonas reinhardtii</name>
    <name type="common">Chlamydomonas smithii</name>
    <dbReference type="NCBI Taxonomy" id="3055"/>
    <lineage>
        <taxon>Eukaryota</taxon>
        <taxon>Viridiplantae</taxon>
        <taxon>Chlorophyta</taxon>
        <taxon>core chlorophytes</taxon>
        <taxon>Chlorophyceae</taxon>
        <taxon>CS clade</taxon>
        <taxon>Chlamydomonadales</taxon>
        <taxon>Chlamydomonadaceae</taxon>
        <taxon>Chlamydomonas</taxon>
    </lineage>
</organism>
<feature type="transit peptide" description="Chloroplast" evidence="1">
    <location>
        <begin position="1"/>
        <end status="unknown"/>
    </location>
</feature>
<feature type="chain" id="PRO_0000020368" description="Inner membrane ALBINO3-like protein 1, chloroplastic">
    <location>
        <begin status="unknown"/>
        <end position="495"/>
    </location>
</feature>
<feature type="topological domain" description="Lumenal" evidence="1">
    <location>
        <begin status="unknown"/>
        <end position="75"/>
    </location>
</feature>
<feature type="transmembrane region" description="Helical" evidence="1">
    <location>
        <begin position="76"/>
        <end position="96"/>
    </location>
</feature>
<feature type="topological domain" description="Stromal" evidence="1">
    <location>
        <begin position="97"/>
        <end position="206"/>
    </location>
</feature>
<feature type="transmembrane region" description="Helical" evidence="1">
    <location>
        <begin position="207"/>
        <end position="227"/>
    </location>
</feature>
<feature type="topological domain" description="Lumenal" evidence="1">
    <location>
        <begin position="228"/>
        <end position="273"/>
    </location>
</feature>
<feature type="transmembrane region" description="Helical" evidence="1">
    <location>
        <begin position="274"/>
        <end position="294"/>
    </location>
</feature>
<feature type="topological domain" description="Stromal" evidence="1">
    <location>
        <begin position="295"/>
        <end position="317"/>
    </location>
</feature>
<feature type="transmembrane region" description="Helical" evidence="1">
    <location>
        <begin position="318"/>
        <end position="338"/>
    </location>
</feature>
<feature type="topological domain" description="Lumenal" evidence="1">
    <location>
        <begin position="339"/>
        <end position="441"/>
    </location>
</feature>
<feature type="transmembrane region" description="Helical" evidence="1">
    <location>
        <begin position="442"/>
        <end position="462"/>
    </location>
</feature>
<feature type="topological domain" description="Stromal" evidence="1">
    <location>
        <begin position="463"/>
        <end position="495"/>
    </location>
</feature>
<comment type="function">
    <text evidence="2">Required for the insertion of some light-harvesting complexes (LHC) proteins into the chloroplast thylakoid membrane. Essential for the assembly and activity of LHC I and II. Its function is probably partly distinct from that of ALB3.2.</text>
</comment>
<comment type="subunit">
    <text>Associates with the LHCII complex and with the psaE subunit of the LHCI complex.</text>
</comment>
<comment type="subcellular location">
    <subcellularLocation>
        <location evidence="2">Plastid</location>
        <location evidence="2">Chloroplast thylakoid membrane</location>
        <topology evidence="2">Multi-pass membrane protein</topology>
    </subcellularLocation>
</comment>
<comment type="similarity">
    <text evidence="3">Belongs to the OXA1/ALB3/YidC (TC 2.A.9.2) family.</text>
</comment>
<reference key="1">
    <citation type="journal article" date="2002" name="Plant Cell">
        <title>Loss of Albino3 leads to the specific depletion of the light-harvesting system.</title>
        <authorList>
            <person name="Bellafiore S."/>
            <person name="Ferris P."/>
            <person name="Naver H."/>
            <person name="Goehre V."/>
            <person name="Rochaix J.-D."/>
        </authorList>
    </citation>
    <scope>NUCLEOTIDE SEQUENCE [GENOMIC DNA]</scope>
    <scope>FUNCTION</scope>
    <scope>SUBCELLULAR LOCATION</scope>
    <scope>ASSOCIATION WITH THE LHCII COMPLEX AND PSAE</scope>
    <source>
        <strain>CC-621</strain>
    </source>
</reference>
<evidence type="ECO:0000255" key="1"/>
<evidence type="ECO:0000269" key="2">
    <source>
    </source>
</evidence>
<evidence type="ECO:0000305" key="3"/>